<name>HIS2_ECTM1</name>
<gene>
    <name evidence="1" type="primary">hisE</name>
    <name type="ordered locus">Pmen_0519</name>
</gene>
<dbReference type="EC" id="3.6.1.31" evidence="1"/>
<dbReference type="EMBL" id="CP000680">
    <property type="protein sequence ID" value="ABP83289.1"/>
    <property type="molecule type" value="Genomic_DNA"/>
</dbReference>
<dbReference type="SMR" id="A4XPM3"/>
<dbReference type="STRING" id="399739.Pmen_0519"/>
<dbReference type="KEGG" id="pmy:Pmen_0519"/>
<dbReference type="PATRIC" id="fig|399739.8.peg.527"/>
<dbReference type="eggNOG" id="COG0140">
    <property type="taxonomic scope" value="Bacteria"/>
</dbReference>
<dbReference type="HOGENOM" id="CLU_123337_1_2_6"/>
<dbReference type="OrthoDB" id="9814738at2"/>
<dbReference type="UniPathway" id="UPA00031">
    <property type="reaction ID" value="UER00007"/>
</dbReference>
<dbReference type="GO" id="GO:0005737">
    <property type="term" value="C:cytoplasm"/>
    <property type="evidence" value="ECO:0007669"/>
    <property type="project" value="UniProtKB-SubCell"/>
</dbReference>
<dbReference type="GO" id="GO:0005524">
    <property type="term" value="F:ATP binding"/>
    <property type="evidence" value="ECO:0007669"/>
    <property type="project" value="UniProtKB-KW"/>
</dbReference>
<dbReference type="GO" id="GO:0004636">
    <property type="term" value="F:phosphoribosyl-ATP diphosphatase activity"/>
    <property type="evidence" value="ECO:0007669"/>
    <property type="project" value="UniProtKB-UniRule"/>
</dbReference>
<dbReference type="GO" id="GO:0000105">
    <property type="term" value="P:L-histidine biosynthetic process"/>
    <property type="evidence" value="ECO:0007669"/>
    <property type="project" value="UniProtKB-UniRule"/>
</dbReference>
<dbReference type="CDD" id="cd11534">
    <property type="entry name" value="NTP-PPase_HisIE_like"/>
    <property type="match status" value="1"/>
</dbReference>
<dbReference type="Gene3D" id="1.10.287.1080">
    <property type="entry name" value="MazG-like"/>
    <property type="match status" value="1"/>
</dbReference>
<dbReference type="HAMAP" id="MF_01020">
    <property type="entry name" value="HisE"/>
    <property type="match status" value="1"/>
</dbReference>
<dbReference type="InterPro" id="IPR008179">
    <property type="entry name" value="HisE"/>
</dbReference>
<dbReference type="InterPro" id="IPR021130">
    <property type="entry name" value="PRib-ATP_PPHydrolase-like"/>
</dbReference>
<dbReference type="NCBIfam" id="TIGR03188">
    <property type="entry name" value="histidine_hisI"/>
    <property type="match status" value="1"/>
</dbReference>
<dbReference type="NCBIfam" id="NF001611">
    <property type="entry name" value="PRK00400.1-3"/>
    <property type="match status" value="1"/>
</dbReference>
<dbReference type="PANTHER" id="PTHR42945">
    <property type="entry name" value="HISTIDINE BIOSYNTHESIS BIFUNCTIONAL PROTEIN"/>
    <property type="match status" value="1"/>
</dbReference>
<dbReference type="PANTHER" id="PTHR42945:SF9">
    <property type="entry name" value="HISTIDINE BIOSYNTHESIS BIFUNCTIONAL PROTEIN HISIE"/>
    <property type="match status" value="1"/>
</dbReference>
<dbReference type="Pfam" id="PF01503">
    <property type="entry name" value="PRA-PH"/>
    <property type="match status" value="1"/>
</dbReference>
<dbReference type="SUPFAM" id="SSF101386">
    <property type="entry name" value="all-alpha NTP pyrophosphatases"/>
    <property type="match status" value="1"/>
</dbReference>
<evidence type="ECO:0000255" key="1">
    <source>
        <dbReference type="HAMAP-Rule" id="MF_01020"/>
    </source>
</evidence>
<sequence>MSDTLSRLAEVLEARKGAAPDSSYVASLYHKGLNKILEKVGEESVETILAAKDAAASGDCKDLIYETADLWFHSLVMLAALGQHPQAVLDELDRRFGLSGHAEKAARPQSE</sequence>
<organism>
    <name type="scientific">Ectopseudomonas mendocina (strain ymp)</name>
    <name type="common">Pseudomonas mendocina</name>
    <dbReference type="NCBI Taxonomy" id="399739"/>
    <lineage>
        <taxon>Bacteria</taxon>
        <taxon>Pseudomonadati</taxon>
        <taxon>Pseudomonadota</taxon>
        <taxon>Gammaproteobacteria</taxon>
        <taxon>Pseudomonadales</taxon>
        <taxon>Pseudomonadaceae</taxon>
        <taxon>Ectopseudomonas</taxon>
    </lineage>
</organism>
<reference key="1">
    <citation type="submission" date="2007-04" db="EMBL/GenBank/DDBJ databases">
        <title>Complete sequence of Pseudomonas mendocina ymp.</title>
        <authorList>
            <consortium name="US DOE Joint Genome Institute"/>
            <person name="Copeland A."/>
            <person name="Lucas S."/>
            <person name="Lapidus A."/>
            <person name="Barry K."/>
            <person name="Glavina del Rio T."/>
            <person name="Dalin E."/>
            <person name="Tice H."/>
            <person name="Pitluck S."/>
            <person name="Kiss H."/>
            <person name="Brettin T."/>
            <person name="Detter J.C."/>
            <person name="Bruce D."/>
            <person name="Han C."/>
            <person name="Schmutz J."/>
            <person name="Larimer F."/>
            <person name="Land M."/>
            <person name="Hauser L."/>
            <person name="Kyrpides N."/>
            <person name="Mikhailova N."/>
            <person name="Hersman L."/>
            <person name="Dubois J."/>
            <person name="Maurice P."/>
            <person name="Richardson P."/>
        </authorList>
    </citation>
    <scope>NUCLEOTIDE SEQUENCE [LARGE SCALE GENOMIC DNA]</scope>
    <source>
        <strain>ymp</strain>
    </source>
</reference>
<feature type="chain" id="PRO_1000063371" description="Phosphoribosyl-ATP pyrophosphatase">
    <location>
        <begin position="1"/>
        <end position="111"/>
    </location>
</feature>
<comment type="catalytic activity">
    <reaction evidence="1">
        <text>1-(5-phospho-beta-D-ribosyl)-ATP + H2O = 1-(5-phospho-beta-D-ribosyl)-5'-AMP + diphosphate + H(+)</text>
        <dbReference type="Rhea" id="RHEA:22828"/>
        <dbReference type="ChEBI" id="CHEBI:15377"/>
        <dbReference type="ChEBI" id="CHEBI:15378"/>
        <dbReference type="ChEBI" id="CHEBI:33019"/>
        <dbReference type="ChEBI" id="CHEBI:59457"/>
        <dbReference type="ChEBI" id="CHEBI:73183"/>
        <dbReference type="EC" id="3.6.1.31"/>
    </reaction>
</comment>
<comment type="pathway">
    <text evidence="1">Amino-acid biosynthesis; L-histidine biosynthesis; L-histidine from 5-phospho-alpha-D-ribose 1-diphosphate: step 2/9.</text>
</comment>
<comment type="subcellular location">
    <subcellularLocation>
        <location evidence="1">Cytoplasm</location>
    </subcellularLocation>
</comment>
<comment type="similarity">
    <text evidence="1">Belongs to the PRA-PH family.</text>
</comment>
<protein>
    <recommendedName>
        <fullName evidence="1">Phosphoribosyl-ATP pyrophosphatase</fullName>
        <shortName evidence="1">PRA-PH</shortName>
        <ecNumber evidence="1">3.6.1.31</ecNumber>
    </recommendedName>
</protein>
<accession>A4XPM3</accession>
<proteinExistence type="inferred from homology"/>
<keyword id="KW-0028">Amino-acid biosynthesis</keyword>
<keyword id="KW-0067">ATP-binding</keyword>
<keyword id="KW-0963">Cytoplasm</keyword>
<keyword id="KW-0368">Histidine biosynthesis</keyword>
<keyword id="KW-0378">Hydrolase</keyword>
<keyword id="KW-0547">Nucleotide-binding</keyword>